<keyword id="KW-1185">Reference proteome</keyword>
<evidence type="ECO:0000255" key="1">
    <source>
        <dbReference type="HAMAP-Rule" id="MF_01455"/>
    </source>
</evidence>
<evidence type="ECO:0000305" key="2"/>
<comment type="similarity">
    <text evidence="1">Belongs to the UPF0757 family.</text>
</comment>
<comment type="sequence caution" evidence="2">
    <conflict type="erroneous initiation">
        <sequence resource="EMBL-CDS" id="CAR02561"/>
    </conflict>
</comment>
<name>YMGG_ECO45</name>
<feature type="chain" id="PRO_0000388958" description="UPF0757 protein YmgG">
    <location>
        <begin position="1"/>
        <end position="114"/>
    </location>
</feature>
<dbReference type="EMBL" id="CU928161">
    <property type="protein sequence ID" value="CAR02561.1"/>
    <property type="status" value="ALT_INIT"/>
    <property type="molecule type" value="Genomic_DNA"/>
</dbReference>
<dbReference type="RefSeq" id="WP_000726974.1">
    <property type="nucleotide sequence ID" value="NC_011742.1"/>
</dbReference>
<dbReference type="KEGG" id="ecz:ECS88_1235"/>
<dbReference type="HOGENOM" id="CLU_164687_0_0_6"/>
<dbReference type="Proteomes" id="UP000000747">
    <property type="component" value="Chromosome"/>
</dbReference>
<dbReference type="HAMAP" id="MF_01455">
    <property type="entry name" value="UPF0757"/>
    <property type="match status" value="1"/>
</dbReference>
<dbReference type="InterPro" id="IPR025693">
    <property type="entry name" value="Gly-zipper_OmpA-like_dom"/>
</dbReference>
<dbReference type="InterPro" id="IPR027367">
    <property type="entry name" value="Gly-zipper_YMGG"/>
</dbReference>
<dbReference type="InterPro" id="IPR022833">
    <property type="entry name" value="UPF0757_YmgG"/>
</dbReference>
<dbReference type="Pfam" id="PF13436">
    <property type="entry name" value="Gly-zipper_OmpA"/>
    <property type="match status" value="1"/>
</dbReference>
<dbReference type="Pfam" id="PF13441">
    <property type="entry name" value="Gly-zipper_YMGG"/>
    <property type="match status" value="1"/>
</dbReference>
<gene>
    <name evidence="1" type="primary">ymgG</name>
    <name type="ordered locus">ECS88_1235</name>
</gene>
<sequence>MKKKILAFGLISALFCSTPAMADMNRTTKGALLGAGVGLLTGNGVNGVLKGAAVGAGVGAVTEKGRDGKNARKGAKVGAAVGAVTGVLTGNGLEGAIKGAVIGGTGGAILGKMK</sequence>
<accession>B7MK69</accession>
<protein>
    <recommendedName>
        <fullName evidence="1">UPF0757 protein YmgG</fullName>
    </recommendedName>
</protein>
<proteinExistence type="inferred from homology"/>
<organism>
    <name type="scientific">Escherichia coli O45:K1 (strain S88 / ExPEC)</name>
    <dbReference type="NCBI Taxonomy" id="585035"/>
    <lineage>
        <taxon>Bacteria</taxon>
        <taxon>Pseudomonadati</taxon>
        <taxon>Pseudomonadota</taxon>
        <taxon>Gammaproteobacteria</taxon>
        <taxon>Enterobacterales</taxon>
        <taxon>Enterobacteriaceae</taxon>
        <taxon>Escherichia</taxon>
    </lineage>
</organism>
<reference key="1">
    <citation type="journal article" date="2009" name="PLoS Genet.">
        <title>Organised genome dynamics in the Escherichia coli species results in highly diverse adaptive paths.</title>
        <authorList>
            <person name="Touchon M."/>
            <person name="Hoede C."/>
            <person name="Tenaillon O."/>
            <person name="Barbe V."/>
            <person name="Baeriswyl S."/>
            <person name="Bidet P."/>
            <person name="Bingen E."/>
            <person name="Bonacorsi S."/>
            <person name="Bouchier C."/>
            <person name="Bouvet O."/>
            <person name="Calteau A."/>
            <person name="Chiapello H."/>
            <person name="Clermont O."/>
            <person name="Cruveiller S."/>
            <person name="Danchin A."/>
            <person name="Diard M."/>
            <person name="Dossat C."/>
            <person name="Karoui M.E."/>
            <person name="Frapy E."/>
            <person name="Garry L."/>
            <person name="Ghigo J.M."/>
            <person name="Gilles A.M."/>
            <person name="Johnson J."/>
            <person name="Le Bouguenec C."/>
            <person name="Lescat M."/>
            <person name="Mangenot S."/>
            <person name="Martinez-Jehanne V."/>
            <person name="Matic I."/>
            <person name="Nassif X."/>
            <person name="Oztas S."/>
            <person name="Petit M.A."/>
            <person name="Pichon C."/>
            <person name="Rouy Z."/>
            <person name="Ruf C.S."/>
            <person name="Schneider D."/>
            <person name="Tourret J."/>
            <person name="Vacherie B."/>
            <person name="Vallenet D."/>
            <person name="Medigue C."/>
            <person name="Rocha E.P.C."/>
            <person name="Denamur E."/>
        </authorList>
    </citation>
    <scope>NUCLEOTIDE SEQUENCE [LARGE SCALE GENOMIC DNA]</scope>
    <source>
        <strain>S88 / ExPEC</strain>
    </source>
</reference>